<comment type="function">
    <text evidence="1">Catalyzes the synthesis of beta-nicotinate D-ribonucleotide from nicotinate and 5-phospho-D-ribose 1-phosphate at the expense of ATP.</text>
</comment>
<comment type="catalytic activity">
    <reaction evidence="1">
        <text>nicotinate + 5-phospho-alpha-D-ribose 1-diphosphate + ATP + H2O = nicotinate beta-D-ribonucleotide + ADP + phosphate + diphosphate</text>
        <dbReference type="Rhea" id="RHEA:36163"/>
        <dbReference type="ChEBI" id="CHEBI:15377"/>
        <dbReference type="ChEBI" id="CHEBI:30616"/>
        <dbReference type="ChEBI" id="CHEBI:32544"/>
        <dbReference type="ChEBI" id="CHEBI:33019"/>
        <dbReference type="ChEBI" id="CHEBI:43474"/>
        <dbReference type="ChEBI" id="CHEBI:57502"/>
        <dbReference type="ChEBI" id="CHEBI:58017"/>
        <dbReference type="ChEBI" id="CHEBI:456216"/>
        <dbReference type="EC" id="6.3.4.21"/>
    </reaction>
</comment>
<comment type="pathway">
    <text evidence="1">Cofactor biosynthesis; NAD(+) biosynthesis; nicotinate D-ribonucleotide from nicotinate: step 1/1.</text>
</comment>
<comment type="PTM">
    <text evidence="1">Transiently phosphorylated on a His residue during the reaction cycle. Phosphorylation strongly increases the affinity for substrates and increases the rate of nicotinate D-ribonucleotide production. Dephosphorylation regenerates the low-affinity form of the enzyme, leading to product release.</text>
</comment>
<comment type="similarity">
    <text evidence="1">Belongs to the NAPRTase family.</text>
</comment>
<accession>Q89SS3</accession>
<dbReference type="EC" id="6.3.4.21" evidence="1"/>
<dbReference type="EMBL" id="BA000040">
    <property type="protein sequence ID" value="BAC47592.1"/>
    <property type="molecule type" value="Genomic_DNA"/>
</dbReference>
<dbReference type="RefSeq" id="NP_768967.1">
    <property type="nucleotide sequence ID" value="NC_004463.1"/>
</dbReference>
<dbReference type="RefSeq" id="WP_011085115.1">
    <property type="nucleotide sequence ID" value="NC_004463.1"/>
</dbReference>
<dbReference type="SMR" id="Q89SS3"/>
<dbReference type="FunCoup" id="Q89SS3">
    <property type="interactions" value="415"/>
</dbReference>
<dbReference type="STRING" id="224911.AAV28_08525"/>
<dbReference type="EnsemblBacteria" id="BAC47592">
    <property type="protein sequence ID" value="BAC47592"/>
    <property type="gene ID" value="BAC47592"/>
</dbReference>
<dbReference type="GeneID" id="46489368"/>
<dbReference type="KEGG" id="bja:bll2327"/>
<dbReference type="PATRIC" id="fig|224911.44.peg.1874"/>
<dbReference type="eggNOG" id="COG1488">
    <property type="taxonomic scope" value="Bacteria"/>
</dbReference>
<dbReference type="HOGENOM" id="CLU_030991_1_0_5"/>
<dbReference type="InParanoid" id="Q89SS3"/>
<dbReference type="OrthoDB" id="9771406at2"/>
<dbReference type="PhylomeDB" id="Q89SS3"/>
<dbReference type="UniPathway" id="UPA00253">
    <property type="reaction ID" value="UER00457"/>
</dbReference>
<dbReference type="Proteomes" id="UP000002526">
    <property type="component" value="Chromosome"/>
</dbReference>
<dbReference type="GO" id="GO:0005829">
    <property type="term" value="C:cytosol"/>
    <property type="evidence" value="ECO:0000318"/>
    <property type="project" value="GO_Central"/>
</dbReference>
<dbReference type="GO" id="GO:0004516">
    <property type="term" value="F:nicotinate phosphoribosyltransferase activity"/>
    <property type="evidence" value="ECO:0000318"/>
    <property type="project" value="GO_Central"/>
</dbReference>
<dbReference type="GO" id="GO:0034355">
    <property type="term" value="P:NAD biosynthetic process via the salvage pathway"/>
    <property type="evidence" value="ECO:0000318"/>
    <property type="project" value="GO_Central"/>
</dbReference>
<dbReference type="FunFam" id="3.20.140.10:FF:000021">
    <property type="entry name" value="Nicotinate phosphoribosyltransferase"/>
    <property type="match status" value="1"/>
</dbReference>
<dbReference type="Gene3D" id="3.20.140.10">
    <property type="entry name" value="nicotinate phosphoribosyltransferase"/>
    <property type="match status" value="1"/>
</dbReference>
<dbReference type="HAMAP" id="MF_00570">
    <property type="entry name" value="NAPRTase"/>
    <property type="match status" value="1"/>
</dbReference>
<dbReference type="InterPro" id="IPR041525">
    <property type="entry name" value="N/Namide_PRibTrfase"/>
</dbReference>
<dbReference type="InterPro" id="IPR040727">
    <property type="entry name" value="NAPRTase_N"/>
</dbReference>
<dbReference type="InterPro" id="IPR006406">
    <property type="entry name" value="Nic_PRibTrfase"/>
</dbReference>
<dbReference type="InterPro" id="IPR007229">
    <property type="entry name" value="Nic_PRibTrfase-Fam"/>
</dbReference>
<dbReference type="InterPro" id="IPR036068">
    <property type="entry name" value="Nicotinate_pribotase-like_C"/>
</dbReference>
<dbReference type="NCBIfam" id="TIGR01514">
    <property type="entry name" value="NAPRTase"/>
    <property type="match status" value="1"/>
</dbReference>
<dbReference type="NCBIfam" id="NF003704">
    <property type="entry name" value="PRK05321.1"/>
    <property type="match status" value="1"/>
</dbReference>
<dbReference type="PANTHER" id="PTHR11098">
    <property type="entry name" value="NICOTINATE PHOSPHORIBOSYLTRANSFERASE"/>
    <property type="match status" value="1"/>
</dbReference>
<dbReference type="PANTHER" id="PTHR11098:SF1">
    <property type="entry name" value="NICOTINATE PHOSPHORIBOSYLTRANSFERASE"/>
    <property type="match status" value="1"/>
</dbReference>
<dbReference type="Pfam" id="PF04095">
    <property type="entry name" value="NAPRTase"/>
    <property type="match status" value="1"/>
</dbReference>
<dbReference type="Pfam" id="PF17767">
    <property type="entry name" value="NAPRTase_N"/>
    <property type="match status" value="1"/>
</dbReference>
<dbReference type="PIRSF" id="PIRSF000484">
    <property type="entry name" value="NAPRT"/>
    <property type="match status" value="1"/>
</dbReference>
<dbReference type="SUPFAM" id="SSF51690">
    <property type="entry name" value="Nicotinate/Quinolinate PRTase C-terminal domain-like"/>
    <property type="match status" value="1"/>
</dbReference>
<dbReference type="SUPFAM" id="SSF54675">
    <property type="entry name" value="Nicotinate/Quinolinate PRTase N-terminal domain-like"/>
    <property type="match status" value="1"/>
</dbReference>
<protein>
    <recommendedName>
        <fullName evidence="1">Nicotinate phosphoribosyltransferase</fullName>
        <shortName evidence="1">NAPRTase</shortName>
        <ecNumber evidence="1">6.3.4.21</ecNumber>
    </recommendedName>
</protein>
<name>PNCB_BRADU</name>
<evidence type="ECO:0000255" key="1">
    <source>
        <dbReference type="HAMAP-Rule" id="MF_00570"/>
    </source>
</evidence>
<reference key="1">
    <citation type="journal article" date="2002" name="DNA Res.">
        <title>Complete genomic sequence of nitrogen-fixing symbiotic bacterium Bradyrhizobium japonicum USDA110.</title>
        <authorList>
            <person name="Kaneko T."/>
            <person name="Nakamura Y."/>
            <person name="Sato S."/>
            <person name="Minamisawa K."/>
            <person name="Uchiumi T."/>
            <person name="Sasamoto S."/>
            <person name="Watanabe A."/>
            <person name="Idesawa K."/>
            <person name="Iriguchi M."/>
            <person name="Kawashima K."/>
            <person name="Kohara M."/>
            <person name="Matsumoto M."/>
            <person name="Shimpo S."/>
            <person name="Tsuruoka H."/>
            <person name="Wada T."/>
            <person name="Yamada M."/>
            <person name="Tabata S."/>
        </authorList>
    </citation>
    <scope>NUCLEOTIDE SEQUENCE [LARGE SCALE GENOMIC DNA]</scope>
    <source>
        <strain>JCM 10833 / BCRC 13528 / IAM 13628 / NBRC 14792 / USDA 110</strain>
    </source>
</reference>
<gene>
    <name evidence="1" type="primary">pncB</name>
    <name type="ordered locus">bll2327</name>
</gene>
<sequence>MTVTDIASRTYNHSWRLDPIIRSLLDTDFYKLLMLQMIREDYSNQQVTFSVINRSRHVRLAEIIDEGELRAQLDHARTIRFTKKELIWLAGNTFYGKTHMFSADFIRWLAEFRLPEYELRKVEGQYELHFHGPWTHTTMWEIPALAILNELRSRAAIKGRGRFELDVLYARAKAKLWTKVERLRKLENLRLSDFGTRRRHGFLWQRWCVEAVKEGLGPSFIGTSNVLLAMDNDLEAIGTNAHELPMVAAGLAKDDEELRWAPYRILDQWRQTYGGNLLIALPDAFGTKAFLRDAPEWVADWTGFRPDSAPPIQAGEEIIAWWEKKGRNPRDKLLVFSDAMDVGSIEETYHHFTGRVRLSFGWGTNLTNDFVGCAPDGSFNLDPISLVCKVSSVDGHPAVKLSDNPEKATGLPSEIERYLRVFGDVGRVRKPVLV</sequence>
<organism>
    <name type="scientific">Bradyrhizobium diazoefficiens (strain JCM 10833 / BCRC 13528 / IAM 13628 / NBRC 14792 / USDA 110)</name>
    <dbReference type="NCBI Taxonomy" id="224911"/>
    <lineage>
        <taxon>Bacteria</taxon>
        <taxon>Pseudomonadati</taxon>
        <taxon>Pseudomonadota</taxon>
        <taxon>Alphaproteobacteria</taxon>
        <taxon>Hyphomicrobiales</taxon>
        <taxon>Nitrobacteraceae</taxon>
        <taxon>Bradyrhizobium</taxon>
    </lineage>
</organism>
<keyword id="KW-0436">Ligase</keyword>
<keyword id="KW-0597">Phosphoprotein</keyword>
<keyword id="KW-0662">Pyridine nucleotide biosynthesis</keyword>
<keyword id="KW-1185">Reference proteome</keyword>
<proteinExistence type="inferred from homology"/>
<feature type="chain" id="PRO_1000146832" description="Nicotinate phosphoribosyltransferase">
    <location>
        <begin position="1"/>
        <end position="434"/>
    </location>
</feature>
<feature type="modified residue" description="Phosphohistidine; by autocatalysis" evidence="1">
    <location>
        <position position="242"/>
    </location>
</feature>